<sequence length="356" mass="39605">MGFVRPVCMTILFLLIVFVLSAPSSAMDLPATSGGHNRSNEEVEFIFQMWMSKHGKTYTNALGEKERRFQNFKDNLRFIDQHNAKNLSYQLGLTRFADLTVQEYRDLFPGSPKPKQRNLKTSRRYVPLAGDQLPESVDWRQEGAVSEIKDQGTCNSCWAFSTVAAVEGLNKIVTGELISLSEQELVDCNLVNNGCYGSGLMDTAFQFLINNNGLDSEKDYPYQGTQGSCNRKQSTSNKVITIDSYEDVPANDEISLQKAVAHQPVSVGVDKKSQEFMLYRSCIYNGPCGTNLDHALVIVGYGSENGQDYWIVRNSWGTTWGDAGYIKIARNFEDPKGLCGIAMLASYPIKNSASNA</sequence>
<name>RDL6_ARATH</name>
<accession>F4JNL3</accession>
<accession>O81748</accession>
<comment type="function">
    <text evidence="2">Probable thiol protease.</text>
</comment>
<comment type="similarity">
    <text evidence="10">Belongs to the peptidase C1 family.</text>
</comment>
<comment type="sequence caution" evidence="10">
    <conflict type="erroneous gene model prediction">
        <sequence resource="EMBL-CDS" id="CAA20473"/>
    </conflict>
</comment>
<comment type="sequence caution" evidence="10">
    <conflict type="erroneous gene model prediction">
        <sequence resource="EMBL-CDS" id="CAB79307"/>
    </conflict>
</comment>
<gene>
    <name evidence="10" type="primary">RDL6</name>
    <name evidence="11" type="ordered locus">At4g23520</name>
    <name evidence="12" type="ORF">F16G20.220</name>
</gene>
<reference key="1">
    <citation type="journal article" date="1999" name="Nature">
        <title>Sequence and analysis of chromosome 4 of the plant Arabidopsis thaliana.</title>
        <authorList>
            <person name="Mayer K.F.X."/>
            <person name="Schueller C."/>
            <person name="Wambutt R."/>
            <person name="Murphy G."/>
            <person name="Volckaert G."/>
            <person name="Pohl T."/>
            <person name="Duesterhoeft A."/>
            <person name="Stiekema W."/>
            <person name="Entian K.-D."/>
            <person name="Terryn N."/>
            <person name="Harris B."/>
            <person name="Ansorge W."/>
            <person name="Brandt P."/>
            <person name="Grivell L.A."/>
            <person name="Rieger M."/>
            <person name="Weichselgartner M."/>
            <person name="de Simone V."/>
            <person name="Obermaier B."/>
            <person name="Mache R."/>
            <person name="Mueller M."/>
            <person name="Kreis M."/>
            <person name="Delseny M."/>
            <person name="Puigdomenech P."/>
            <person name="Watson M."/>
            <person name="Schmidtheini T."/>
            <person name="Reichert B."/>
            <person name="Portetelle D."/>
            <person name="Perez-Alonso M."/>
            <person name="Boutry M."/>
            <person name="Bancroft I."/>
            <person name="Vos P."/>
            <person name="Hoheisel J."/>
            <person name="Zimmermann W."/>
            <person name="Wedler H."/>
            <person name="Ridley P."/>
            <person name="Langham S.-A."/>
            <person name="McCullagh B."/>
            <person name="Bilham L."/>
            <person name="Robben J."/>
            <person name="van der Schueren J."/>
            <person name="Grymonprez B."/>
            <person name="Chuang Y.-J."/>
            <person name="Vandenbussche F."/>
            <person name="Braeken M."/>
            <person name="Weltjens I."/>
            <person name="Voet M."/>
            <person name="Bastiaens I."/>
            <person name="Aert R."/>
            <person name="Defoor E."/>
            <person name="Weitzenegger T."/>
            <person name="Bothe G."/>
            <person name="Ramsperger U."/>
            <person name="Hilbert H."/>
            <person name="Braun M."/>
            <person name="Holzer E."/>
            <person name="Brandt A."/>
            <person name="Peters S."/>
            <person name="van Staveren M."/>
            <person name="Dirkse W."/>
            <person name="Mooijman P."/>
            <person name="Klein Lankhorst R."/>
            <person name="Rose M."/>
            <person name="Hauf J."/>
            <person name="Koetter P."/>
            <person name="Berneiser S."/>
            <person name="Hempel S."/>
            <person name="Feldpausch M."/>
            <person name="Lamberth S."/>
            <person name="Van den Daele H."/>
            <person name="De Keyser A."/>
            <person name="Buysshaert C."/>
            <person name="Gielen J."/>
            <person name="Villarroel R."/>
            <person name="De Clercq R."/>
            <person name="van Montagu M."/>
            <person name="Rogers J."/>
            <person name="Cronin A."/>
            <person name="Quail M.A."/>
            <person name="Bray-Allen S."/>
            <person name="Clark L."/>
            <person name="Doggett J."/>
            <person name="Hall S."/>
            <person name="Kay M."/>
            <person name="Lennard N."/>
            <person name="McLay K."/>
            <person name="Mayes R."/>
            <person name="Pettett A."/>
            <person name="Rajandream M.A."/>
            <person name="Lyne M."/>
            <person name="Benes V."/>
            <person name="Rechmann S."/>
            <person name="Borkova D."/>
            <person name="Bloecker H."/>
            <person name="Scharfe M."/>
            <person name="Grimm M."/>
            <person name="Loehnert T.-H."/>
            <person name="Dose S."/>
            <person name="de Haan M."/>
            <person name="Maarse A.C."/>
            <person name="Schaefer M."/>
            <person name="Mueller-Auer S."/>
            <person name="Gabel C."/>
            <person name="Fuchs M."/>
            <person name="Fartmann B."/>
            <person name="Granderath K."/>
            <person name="Dauner D."/>
            <person name="Herzl A."/>
            <person name="Neumann S."/>
            <person name="Argiriou A."/>
            <person name="Vitale D."/>
            <person name="Liguori R."/>
            <person name="Piravandi E."/>
            <person name="Massenet O."/>
            <person name="Quigley F."/>
            <person name="Clabauld G."/>
            <person name="Muendlein A."/>
            <person name="Felber R."/>
            <person name="Schnabl S."/>
            <person name="Hiller R."/>
            <person name="Schmidt W."/>
            <person name="Lecharny A."/>
            <person name="Aubourg S."/>
            <person name="Chefdor F."/>
            <person name="Cooke R."/>
            <person name="Berger C."/>
            <person name="Monfort A."/>
            <person name="Casacuberta E."/>
            <person name="Gibbons T."/>
            <person name="Weber N."/>
            <person name="Vandenbol M."/>
            <person name="Bargues M."/>
            <person name="Terol J."/>
            <person name="Torres A."/>
            <person name="Perez-Perez A."/>
            <person name="Purnelle B."/>
            <person name="Bent E."/>
            <person name="Johnson S."/>
            <person name="Tacon D."/>
            <person name="Jesse T."/>
            <person name="Heijnen L."/>
            <person name="Schwarz S."/>
            <person name="Scholler P."/>
            <person name="Heber S."/>
            <person name="Francs P."/>
            <person name="Bielke C."/>
            <person name="Frishman D."/>
            <person name="Haase D."/>
            <person name="Lemcke K."/>
            <person name="Mewes H.-W."/>
            <person name="Stocker S."/>
            <person name="Zaccaria P."/>
            <person name="Bevan M."/>
            <person name="Wilson R.K."/>
            <person name="de la Bastide M."/>
            <person name="Habermann K."/>
            <person name="Parnell L."/>
            <person name="Dedhia N."/>
            <person name="Gnoj L."/>
            <person name="Schutz K."/>
            <person name="Huang E."/>
            <person name="Spiegel L."/>
            <person name="Sekhon M."/>
            <person name="Murray J."/>
            <person name="Sheet P."/>
            <person name="Cordes M."/>
            <person name="Abu-Threideh J."/>
            <person name="Stoneking T."/>
            <person name="Kalicki J."/>
            <person name="Graves T."/>
            <person name="Harmon G."/>
            <person name="Edwards J."/>
            <person name="Latreille P."/>
            <person name="Courtney L."/>
            <person name="Cloud J."/>
            <person name="Abbott A."/>
            <person name="Scott K."/>
            <person name="Johnson D."/>
            <person name="Minx P."/>
            <person name="Bentley D."/>
            <person name="Fulton B."/>
            <person name="Miller N."/>
            <person name="Greco T."/>
            <person name="Kemp K."/>
            <person name="Kramer J."/>
            <person name="Fulton L."/>
            <person name="Mardis E."/>
            <person name="Dante M."/>
            <person name="Pepin K."/>
            <person name="Hillier L.W."/>
            <person name="Nelson J."/>
            <person name="Spieth J."/>
            <person name="Ryan E."/>
            <person name="Andrews S."/>
            <person name="Geisel C."/>
            <person name="Layman D."/>
            <person name="Du H."/>
            <person name="Ali J."/>
            <person name="Berghoff A."/>
            <person name="Jones K."/>
            <person name="Drone K."/>
            <person name="Cotton M."/>
            <person name="Joshu C."/>
            <person name="Antonoiu B."/>
            <person name="Zidanic M."/>
            <person name="Strong C."/>
            <person name="Sun H."/>
            <person name="Lamar B."/>
            <person name="Yordan C."/>
            <person name="Ma P."/>
            <person name="Zhong J."/>
            <person name="Preston R."/>
            <person name="Vil D."/>
            <person name="Shekher M."/>
            <person name="Matero A."/>
            <person name="Shah R."/>
            <person name="Swaby I.K."/>
            <person name="O'Shaughnessy A."/>
            <person name="Rodriguez M."/>
            <person name="Hoffman J."/>
            <person name="Till S."/>
            <person name="Granat S."/>
            <person name="Shohdy N."/>
            <person name="Hasegawa A."/>
            <person name="Hameed A."/>
            <person name="Lodhi M."/>
            <person name="Johnson A."/>
            <person name="Chen E."/>
            <person name="Marra M.A."/>
            <person name="Martienssen R."/>
            <person name="McCombie W.R."/>
        </authorList>
    </citation>
    <scope>NUCLEOTIDE SEQUENCE [LARGE SCALE GENOMIC DNA]</scope>
    <source>
        <strain>cv. Columbia</strain>
    </source>
</reference>
<reference key="2">
    <citation type="journal article" date="2017" name="Plant J.">
        <title>Araport11: a complete reannotation of the Arabidopsis thaliana reference genome.</title>
        <authorList>
            <person name="Cheng C.Y."/>
            <person name="Krishnakumar V."/>
            <person name="Chan A.P."/>
            <person name="Thibaud-Nissen F."/>
            <person name="Schobel S."/>
            <person name="Town C.D."/>
        </authorList>
    </citation>
    <scope>GENOME REANNOTATION</scope>
    <source>
        <strain>cv. Columbia</strain>
    </source>
</reference>
<protein>
    <recommendedName>
        <fullName evidence="10">Probable cysteine protease RDL6</fullName>
        <ecNumber evidence="3">3.4.22.-</ecNumber>
    </recommendedName>
    <alternativeName>
        <fullName evidence="10">RD21A-like protease 6</fullName>
    </alternativeName>
</protein>
<evidence type="ECO:0000250" key="1">
    <source>
        <dbReference type="UniProtKB" id="P00785"/>
    </source>
</evidence>
<evidence type="ECO:0000250" key="2">
    <source>
        <dbReference type="UniProtKB" id="P43297"/>
    </source>
</evidence>
<evidence type="ECO:0000250" key="3">
    <source>
        <dbReference type="UniProtKB" id="P80884"/>
    </source>
</evidence>
<evidence type="ECO:0000250" key="4">
    <source>
        <dbReference type="UniProtKB" id="P84346"/>
    </source>
</evidence>
<evidence type="ECO:0000255" key="5"/>
<evidence type="ECO:0000255" key="6">
    <source>
        <dbReference type="PROSITE-ProRule" id="PRU00498"/>
    </source>
</evidence>
<evidence type="ECO:0000255" key="7">
    <source>
        <dbReference type="PROSITE-ProRule" id="PRU10088"/>
    </source>
</evidence>
<evidence type="ECO:0000255" key="8">
    <source>
        <dbReference type="PROSITE-ProRule" id="PRU10089"/>
    </source>
</evidence>
<evidence type="ECO:0000255" key="9">
    <source>
        <dbReference type="PROSITE-ProRule" id="PRU10090"/>
    </source>
</evidence>
<evidence type="ECO:0000305" key="10"/>
<evidence type="ECO:0000312" key="11">
    <source>
        <dbReference type="Araport" id="AT4G23520"/>
    </source>
</evidence>
<evidence type="ECO:0000312" key="12">
    <source>
        <dbReference type="EMBL" id="CAB79307.1"/>
    </source>
</evidence>
<feature type="signal peptide" evidence="5">
    <location>
        <begin position="1"/>
        <end position="26"/>
    </location>
</feature>
<feature type="propeptide" id="PRO_0000436324" description="Activation peptide" evidence="1">
    <location>
        <begin position="27"/>
        <end position="132"/>
    </location>
</feature>
<feature type="chain" id="PRO_5005397739" description="Probable cysteine protease RDL6">
    <location>
        <begin position="133"/>
        <end position="356"/>
    </location>
</feature>
<feature type="active site" evidence="7">
    <location>
        <position position="157"/>
    </location>
</feature>
<feature type="active site" evidence="8">
    <location>
        <position position="294"/>
    </location>
</feature>
<feature type="active site" evidence="9">
    <location>
        <position position="314"/>
    </location>
</feature>
<feature type="glycosylation site" description="N-linked (GlcNAc...) asparagine" evidence="6">
    <location>
        <position position="37"/>
    </location>
</feature>
<feature type="glycosylation site" description="N-linked (GlcNAc...) asparagine" evidence="6">
    <location>
        <position position="86"/>
    </location>
</feature>
<feature type="disulfide bond" evidence="4">
    <location>
        <begin position="154"/>
        <end position="195"/>
    </location>
</feature>
<feature type="disulfide bond" evidence="4">
    <location>
        <begin position="188"/>
        <end position="229"/>
    </location>
</feature>
<feature type="disulfide bond" evidence="4">
    <location>
        <begin position="288"/>
        <end position="339"/>
    </location>
</feature>
<dbReference type="EC" id="3.4.22.-" evidence="3"/>
<dbReference type="EMBL" id="AL031326">
    <property type="protein sequence ID" value="CAA20473.1"/>
    <property type="status" value="ALT_SEQ"/>
    <property type="molecule type" value="Genomic_DNA"/>
</dbReference>
<dbReference type="EMBL" id="AL161559">
    <property type="protein sequence ID" value="CAB79307.1"/>
    <property type="status" value="ALT_SEQ"/>
    <property type="molecule type" value="Genomic_DNA"/>
</dbReference>
<dbReference type="EMBL" id="CP002687">
    <property type="protein sequence ID" value="AEE84771.1"/>
    <property type="molecule type" value="Genomic_DNA"/>
</dbReference>
<dbReference type="PIR" id="T05390">
    <property type="entry name" value="T05390"/>
</dbReference>
<dbReference type="RefSeq" id="NP_567686.2">
    <property type="nucleotide sequence ID" value="NM_118483.3"/>
</dbReference>
<dbReference type="SMR" id="F4JNL3"/>
<dbReference type="FunCoup" id="F4JNL3">
    <property type="interactions" value="223"/>
</dbReference>
<dbReference type="STRING" id="3702.F4JNL3"/>
<dbReference type="MEROPS" id="C01.A22"/>
<dbReference type="GlyCosmos" id="F4JNL3">
    <property type="glycosylation" value="2 sites, No reported glycans"/>
</dbReference>
<dbReference type="GlyGen" id="F4JNL3">
    <property type="glycosylation" value="2 sites"/>
</dbReference>
<dbReference type="PaxDb" id="3702-AT4G23520.1"/>
<dbReference type="ProteomicsDB" id="236434"/>
<dbReference type="EnsemblPlants" id="AT4G23520.1">
    <property type="protein sequence ID" value="AT4G23520.1"/>
    <property type="gene ID" value="AT4G23520"/>
</dbReference>
<dbReference type="GeneID" id="828452"/>
<dbReference type="Gramene" id="AT4G23520.1">
    <property type="protein sequence ID" value="AT4G23520.1"/>
    <property type="gene ID" value="AT4G23520"/>
</dbReference>
<dbReference type="KEGG" id="ath:AT4G23520"/>
<dbReference type="Araport" id="AT4G23520"/>
<dbReference type="TAIR" id="AT4G23520"/>
<dbReference type="eggNOG" id="KOG1543">
    <property type="taxonomic scope" value="Eukaryota"/>
</dbReference>
<dbReference type="HOGENOM" id="CLU_012184_1_0_1"/>
<dbReference type="InParanoid" id="F4JNL3"/>
<dbReference type="OMA" id="GYMDISF"/>
<dbReference type="PRO" id="PR:F4JNL3"/>
<dbReference type="Proteomes" id="UP000006548">
    <property type="component" value="Chromosome 4"/>
</dbReference>
<dbReference type="ExpressionAtlas" id="F4JNL3">
    <property type="expression patterns" value="baseline and differential"/>
</dbReference>
<dbReference type="GO" id="GO:0008234">
    <property type="term" value="F:cysteine-type peptidase activity"/>
    <property type="evidence" value="ECO:0007669"/>
    <property type="project" value="UniProtKB-KW"/>
</dbReference>
<dbReference type="GO" id="GO:0006508">
    <property type="term" value="P:proteolysis"/>
    <property type="evidence" value="ECO:0007669"/>
    <property type="project" value="UniProtKB-KW"/>
</dbReference>
<dbReference type="CDD" id="cd02248">
    <property type="entry name" value="Peptidase_C1A"/>
    <property type="match status" value="1"/>
</dbReference>
<dbReference type="FunFam" id="3.90.70.10:FF:000068">
    <property type="entry name" value="Cysteine protease 1"/>
    <property type="match status" value="1"/>
</dbReference>
<dbReference type="Gene3D" id="3.90.70.10">
    <property type="entry name" value="Cysteine proteinases"/>
    <property type="match status" value="1"/>
</dbReference>
<dbReference type="InterPro" id="IPR038765">
    <property type="entry name" value="Papain-like_cys_pep_sf"/>
</dbReference>
<dbReference type="InterPro" id="IPR025661">
    <property type="entry name" value="Pept_asp_AS"/>
</dbReference>
<dbReference type="InterPro" id="IPR025660">
    <property type="entry name" value="Pept_his_AS"/>
</dbReference>
<dbReference type="InterPro" id="IPR013128">
    <property type="entry name" value="Peptidase_C1A"/>
</dbReference>
<dbReference type="InterPro" id="IPR000668">
    <property type="entry name" value="Peptidase_C1A_C"/>
</dbReference>
<dbReference type="InterPro" id="IPR039417">
    <property type="entry name" value="Peptidase_C1A_papain-like"/>
</dbReference>
<dbReference type="InterPro" id="IPR013201">
    <property type="entry name" value="Prot_inhib_I29"/>
</dbReference>
<dbReference type="PANTHER" id="PTHR12411">
    <property type="entry name" value="CYSTEINE PROTEASE FAMILY C1-RELATED"/>
    <property type="match status" value="1"/>
</dbReference>
<dbReference type="Pfam" id="PF08246">
    <property type="entry name" value="Inhibitor_I29"/>
    <property type="match status" value="1"/>
</dbReference>
<dbReference type="Pfam" id="PF00112">
    <property type="entry name" value="Peptidase_C1"/>
    <property type="match status" value="1"/>
</dbReference>
<dbReference type="PRINTS" id="PR00705">
    <property type="entry name" value="PAPAIN"/>
</dbReference>
<dbReference type="SMART" id="SM00848">
    <property type="entry name" value="Inhibitor_I29"/>
    <property type="match status" value="1"/>
</dbReference>
<dbReference type="SMART" id="SM00645">
    <property type="entry name" value="Pept_C1"/>
    <property type="match status" value="1"/>
</dbReference>
<dbReference type="SUPFAM" id="SSF54001">
    <property type="entry name" value="Cysteine proteinases"/>
    <property type="match status" value="1"/>
</dbReference>
<dbReference type="PROSITE" id="PS00640">
    <property type="entry name" value="THIOL_PROTEASE_ASN"/>
    <property type="match status" value="1"/>
</dbReference>
<dbReference type="PROSITE" id="PS00639">
    <property type="entry name" value="THIOL_PROTEASE_HIS"/>
    <property type="match status" value="1"/>
</dbReference>
<keyword id="KW-1015">Disulfide bond</keyword>
<keyword id="KW-0325">Glycoprotein</keyword>
<keyword id="KW-0378">Hydrolase</keyword>
<keyword id="KW-0645">Protease</keyword>
<keyword id="KW-1185">Reference proteome</keyword>
<keyword id="KW-0732">Signal</keyword>
<keyword id="KW-0788">Thiol protease</keyword>
<keyword id="KW-0865">Zymogen</keyword>
<organism>
    <name type="scientific">Arabidopsis thaliana</name>
    <name type="common">Mouse-ear cress</name>
    <dbReference type="NCBI Taxonomy" id="3702"/>
    <lineage>
        <taxon>Eukaryota</taxon>
        <taxon>Viridiplantae</taxon>
        <taxon>Streptophyta</taxon>
        <taxon>Embryophyta</taxon>
        <taxon>Tracheophyta</taxon>
        <taxon>Spermatophyta</taxon>
        <taxon>Magnoliopsida</taxon>
        <taxon>eudicotyledons</taxon>
        <taxon>Gunneridae</taxon>
        <taxon>Pentapetalae</taxon>
        <taxon>rosids</taxon>
        <taxon>malvids</taxon>
        <taxon>Brassicales</taxon>
        <taxon>Brassicaceae</taxon>
        <taxon>Camelineae</taxon>
        <taxon>Arabidopsis</taxon>
    </lineage>
</organism>
<proteinExistence type="inferred from homology"/>